<reference key="1">
    <citation type="journal article" date="1992" name="Mol. Cell. Biol.">
        <title>CSD2, CSD3, and CSD4, genes required for chitin synthesis in Saccharomyces cerevisiae: the CSD2 gene product is related to chitin synthases and to developmentally regulated proteins in Rhizobium species and Xenopus laevis.</title>
        <authorList>
            <person name="Bulawa C.E."/>
        </authorList>
    </citation>
    <scope>NUCLEOTIDE SEQUENCE [GENOMIC DNA]</scope>
</reference>
<reference key="2">
    <citation type="journal article" date="1994" name="Yeast">
        <title>The complete sequence of a 33 kb fragment on the right arm of chromosome II from Saccharomyces cerevisiae reveals 16 open reading frames, including ten new open reading frames, five previously identified genes and a homologue of the SCO1 gene.</title>
        <authorList>
            <person name="Smits P.H.M."/>
            <person name="de Haan M."/>
            <person name="Maat C."/>
            <person name="Grivell L.A."/>
        </authorList>
    </citation>
    <scope>NUCLEOTIDE SEQUENCE [GENOMIC DNA]</scope>
    <source>
        <strain>ATCC 204508 / S288c</strain>
    </source>
</reference>
<reference key="3">
    <citation type="journal article" date="1994" name="EMBO J.">
        <title>Complete DNA sequence of yeast chromosome II.</title>
        <authorList>
            <person name="Feldmann H."/>
            <person name="Aigle M."/>
            <person name="Aljinovic G."/>
            <person name="Andre B."/>
            <person name="Baclet M.C."/>
            <person name="Barthe C."/>
            <person name="Baur A."/>
            <person name="Becam A.-M."/>
            <person name="Biteau N."/>
            <person name="Boles E."/>
            <person name="Brandt T."/>
            <person name="Brendel M."/>
            <person name="Brueckner M."/>
            <person name="Bussereau F."/>
            <person name="Christiansen C."/>
            <person name="Contreras R."/>
            <person name="Crouzet M."/>
            <person name="Cziepluch C."/>
            <person name="Demolis N."/>
            <person name="Delaveau T."/>
            <person name="Doignon F."/>
            <person name="Domdey H."/>
            <person name="Duesterhus S."/>
            <person name="Dubois E."/>
            <person name="Dujon B."/>
            <person name="El Bakkoury M."/>
            <person name="Entian K.-D."/>
            <person name="Feuermann M."/>
            <person name="Fiers W."/>
            <person name="Fobo G.M."/>
            <person name="Fritz C."/>
            <person name="Gassenhuber J."/>
            <person name="Glansdorff N."/>
            <person name="Goffeau A."/>
            <person name="Grivell L.A."/>
            <person name="de Haan M."/>
            <person name="Hein C."/>
            <person name="Herbert C.J."/>
            <person name="Hollenberg C.P."/>
            <person name="Holmstroem K."/>
            <person name="Jacq C."/>
            <person name="Jacquet M."/>
            <person name="Jauniaux J.-C."/>
            <person name="Jonniaux J.-L."/>
            <person name="Kallesoee T."/>
            <person name="Kiesau P."/>
            <person name="Kirchrath L."/>
            <person name="Koetter P."/>
            <person name="Korol S."/>
            <person name="Liebl S."/>
            <person name="Logghe M."/>
            <person name="Lohan A.J.E."/>
            <person name="Louis E.J."/>
            <person name="Li Z.Y."/>
            <person name="Maat M.J."/>
            <person name="Mallet L."/>
            <person name="Mannhaupt G."/>
            <person name="Messenguy F."/>
            <person name="Miosga T."/>
            <person name="Molemans F."/>
            <person name="Mueller S."/>
            <person name="Nasr F."/>
            <person name="Obermaier B."/>
            <person name="Perea J."/>
            <person name="Pierard A."/>
            <person name="Piravandi E."/>
            <person name="Pohl F.M."/>
            <person name="Pohl T.M."/>
            <person name="Potier S."/>
            <person name="Proft M."/>
            <person name="Purnelle B."/>
            <person name="Ramezani Rad M."/>
            <person name="Rieger M."/>
            <person name="Rose M."/>
            <person name="Schaaff-Gerstenschlaeger I."/>
            <person name="Scherens B."/>
            <person name="Schwarzlose C."/>
            <person name="Skala J."/>
            <person name="Slonimski P.P."/>
            <person name="Smits P.H.M."/>
            <person name="Souciet J.-L."/>
            <person name="Steensma H.Y."/>
            <person name="Stucka R."/>
            <person name="Urrestarazu L.A."/>
            <person name="van der Aart Q.J.M."/>
            <person name="Van Dyck L."/>
            <person name="Vassarotti A."/>
            <person name="Vetter I."/>
            <person name="Vierendeels F."/>
            <person name="Vissers S."/>
            <person name="Wagner G."/>
            <person name="de Wergifosse P."/>
            <person name="Wolfe K.H."/>
            <person name="Zagulski M."/>
            <person name="Zimmermann F.K."/>
            <person name="Mewes H.-W."/>
            <person name="Kleine K."/>
        </authorList>
    </citation>
    <scope>NUCLEOTIDE SEQUENCE [LARGE SCALE GENOMIC DNA]</scope>
    <source>
        <strain>ATCC 204508 / S288c</strain>
    </source>
</reference>
<reference key="4">
    <citation type="journal article" date="2014" name="G3 (Bethesda)">
        <title>The reference genome sequence of Saccharomyces cerevisiae: Then and now.</title>
        <authorList>
            <person name="Engel S.R."/>
            <person name="Dietrich F.S."/>
            <person name="Fisk D.G."/>
            <person name="Binkley G."/>
            <person name="Balakrishnan R."/>
            <person name="Costanzo M.C."/>
            <person name="Dwight S.S."/>
            <person name="Hitz B.C."/>
            <person name="Karra K."/>
            <person name="Nash R.S."/>
            <person name="Weng S."/>
            <person name="Wong E.D."/>
            <person name="Lloyd P."/>
            <person name="Skrzypek M.S."/>
            <person name="Miyasato S.R."/>
            <person name="Simison M."/>
            <person name="Cherry J.M."/>
        </authorList>
    </citation>
    <scope>GENOME REANNOTATION</scope>
    <source>
        <strain>ATCC 204508 / S288c</strain>
    </source>
</reference>
<reference key="5">
    <citation type="journal article" date="1991" name="J. Cell Biol.">
        <title>CAL1, a gene required for activity of chitin synthase 3 in Saccharomyces cerevisiae.</title>
        <authorList>
            <person name="Valdivieso M.H."/>
            <person name="Mol P.C."/>
            <person name="Shaw J.A."/>
            <person name="Cabib E."/>
            <person name="Duran A."/>
        </authorList>
    </citation>
    <scope>NUCLEOTIDE SEQUENCE [GENOMIC DNA] OF 67-1165</scope>
    <scope>FUNCTION</scope>
</reference>
<reference key="6">
    <citation type="journal article" date="1991" name="J. Cell Biol.">
        <title>The function of chitin synthases 2 and 3 in the Saccharomyces cerevisiae cell cycle.</title>
        <authorList>
            <person name="Shaw J.A."/>
            <person name="Mol P.C."/>
            <person name="Bowers B."/>
            <person name="Silverman S.J."/>
            <person name="Valdivieso M.H."/>
            <person name="Duran A."/>
            <person name="Cabib E."/>
        </authorList>
    </citation>
    <scope>FUNCTION</scope>
</reference>
<reference key="7">
    <citation type="journal article" date="1992" name="Yeast">
        <title>DIT101 (CSD2, CAL1), a cell cycle-regulated yeast gene required for synthesis of chitin in cell walls and chitosan in spore walls.</title>
        <authorList>
            <person name="Pammer M."/>
            <person name="Briza P."/>
            <person name="Ellinger A."/>
            <person name="Schuster T."/>
            <person name="Stucka R."/>
            <person name="Feldmann H."/>
            <person name="Breitenbach M."/>
        </authorList>
    </citation>
    <scope>FUNCTION</scope>
</reference>
<reference key="8">
    <citation type="journal article" date="1996" name="J. Cell Biol.">
        <title>Differential trafficking and timed localization of two chitin synthase proteins, Chs2p and Chs3p.</title>
        <authorList>
            <person name="Chuang J.S."/>
            <person name="Schekman R.W."/>
        </authorList>
    </citation>
    <scope>SUBCELLULAR LOCATION</scope>
</reference>
<reference key="9">
    <citation type="journal article" date="1996" name="Mol. Biol. Cell">
        <title>Chs1p and Chs3p, two proteins involved in chitin synthesis, populate a compartment of the Saccharomyces cerevisiae endocytic pathway.</title>
        <authorList>
            <person name="Ziman M."/>
            <person name="Chuang J.S."/>
            <person name="Schekman R.W."/>
        </authorList>
    </citation>
    <scope>SUBCELLULAR LOCATION</scope>
</reference>
<reference key="10">
    <citation type="journal article" date="1997" name="J. Cell Biol.">
        <title>A septin-based hierarchy of proteins required for localized deposition of chitin in the Saccharomyces cerevisiae cell wall.</title>
        <authorList>
            <person name="DeMarini D.J."/>
            <person name="Adams A.E."/>
            <person name="Fares H."/>
            <person name="De Virgilio C."/>
            <person name="Valle G."/>
            <person name="Chuang J.S."/>
            <person name="Pringle J.R."/>
        </authorList>
    </citation>
    <scope>SUBUNIT</scope>
</reference>
<reference key="11">
    <citation type="journal article" date="1997" name="Yeast">
        <title>Characterization of CHS4 (CAL2), a gene of Saccharomyces cerevisiae involved in chitin biosynthesis and allelic to SKT5 and CSD4.</title>
        <authorList>
            <person name="Trilla J.A."/>
            <person name="Cos T."/>
            <person name="Duran A."/>
            <person name="Roncero C."/>
        </authorList>
    </citation>
    <scope>DISRUPTION PHENOTYPE</scope>
</reference>
<reference key="12">
    <citation type="journal article" date="1998" name="Eur. J. Biochem.">
        <title>Molecular analysis of Chs3p participation in chitin synthase III activity.</title>
        <authorList>
            <person name="Cos T."/>
            <person name="Ford R.A."/>
            <person name="Trilla J.A."/>
            <person name="Duran A."/>
            <person name="Cabib E."/>
            <person name="Roncero C."/>
        </authorList>
    </citation>
    <scope>FUNCTION</scope>
    <scope>CATALYTIC ACTIVITY</scope>
    <scope>GLYCOSYLATION</scope>
    <scope>MUTAGENESIS OF SER-991; ARG-993; ARG-994; ARG-995 AND SER-999</scope>
</reference>
<reference key="13">
    <citation type="journal article" date="2003" name="Nature">
        <title>Global analysis of protein expression in yeast.</title>
        <authorList>
            <person name="Ghaemmaghami S."/>
            <person name="Huh W.-K."/>
            <person name="Bower K."/>
            <person name="Howson R.W."/>
            <person name="Belle A."/>
            <person name="Dephoure N."/>
            <person name="O'Shea E.K."/>
            <person name="Weissman J.S."/>
        </authorList>
    </citation>
    <scope>LEVEL OF PROTEIN EXPRESSION [LARGE SCALE ANALYSIS]</scope>
</reference>
<reference key="14">
    <citation type="journal article" date="2003" name="Nat. Biotechnol.">
        <title>A proteomics approach to understanding protein ubiquitination.</title>
        <authorList>
            <person name="Peng J."/>
            <person name="Schwartz D."/>
            <person name="Elias J.E."/>
            <person name="Thoreen C.C."/>
            <person name="Cheng D."/>
            <person name="Marsischky G."/>
            <person name="Roelofs J."/>
            <person name="Finley D."/>
            <person name="Gygi S.P."/>
        </authorList>
    </citation>
    <scope>UBIQUITINATION [LARGE SCALE ANALYSIS] AT LYS-136</scope>
    <scope>IDENTIFICATION BY MASS SPECTROMETRY</scope>
    <source>
        <strain>SUB592</strain>
    </source>
</reference>
<reference key="15">
    <citation type="journal article" date="2003" name="Proc. Natl. Acad. Sci. U.S.A.">
        <title>The yeasts Rho1p and Pkc1p regulate the transport of chitin synthase III (Chs3p) from internal stores to the plasma membrane.</title>
        <authorList>
            <person name="Valdivia R.H."/>
            <person name="Schekman R."/>
        </authorList>
    </citation>
    <scope>SUBCELLULAR LOCATION</scope>
</reference>
<reference key="16">
    <citation type="journal article" date="2006" name="J. Cell Biol.">
        <title>Palmitoylation by the DHHC protein Pfa4 regulates the ER exit of Chs3.</title>
        <authorList>
            <person name="Lam K.K.Y."/>
            <person name="Davey M."/>
            <person name="Sun B."/>
            <person name="Roth A.F."/>
            <person name="Davis N.G."/>
            <person name="Conibear E."/>
        </authorList>
    </citation>
    <scope>SUBCELLULAR LOCATION</scope>
</reference>
<reference key="17">
    <citation type="journal article" date="2006" name="Proc. Natl. Acad. Sci. U.S.A.">
        <title>A global topology map of the Saccharomyces cerevisiae membrane proteome.</title>
        <authorList>
            <person name="Kim H."/>
            <person name="Melen K."/>
            <person name="Oesterberg M."/>
            <person name="von Heijne G."/>
        </authorList>
    </citation>
    <scope>TOPOLOGY [LARGE SCALE ANALYSIS]</scope>
    <source>
        <strain>ATCC 208353 / W303-1A</strain>
    </source>
</reference>
<reference key="18">
    <citation type="journal article" date="2007" name="J. Cell Sci.">
        <title>Chitin synthase III requires Chs4p-dependent translocation of Chs3p into the plasma membrane.</title>
        <authorList>
            <person name="Reyes A."/>
            <person name="Sanz M."/>
            <person name="Duran A."/>
            <person name="Roncero C."/>
        </authorList>
    </citation>
    <scope>SUBCELLULAR LOCATION</scope>
</reference>
<reference key="19">
    <citation type="journal article" date="2007" name="J. Proteome Res.">
        <title>Large-scale phosphorylation analysis of alpha-factor-arrested Saccharomyces cerevisiae.</title>
        <authorList>
            <person name="Li X."/>
            <person name="Gerber S.A."/>
            <person name="Rudner A.D."/>
            <person name="Beausoleil S.A."/>
            <person name="Haas W."/>
            <person name="Villen J."/>
            <person name="Elias J.E."/>
            <person name="Gygi S.P."/>
        </authorList>
    </citation>
    <scope>PHOSPHORYLATION [LARGE SCALE ANALYSIS] AT SER-537 AND THR-538</scope>
    <scope>IDENTIFICATION BY MASS SPECTROMETRY [LARGE SCALE ANALYSIS]</scope>
    <source>
        <strain>ADR376</strain>
    </source>
</reference>
<reference key="20">
    <citation type="journal article" date="2008" name="Mol. Cell. Proteomics">
        <title>A multidimensional chromatography technology for in-depth phosphoproteome analysis.</title>
        <authorList>
            <person name="Albuquerque C.P."/>
            <person name="Smolka M.B."/>
            <person name="Payne S.H."/>
            <person name="Bafna V."/>
            <person name="Eng J."/>
            <person name="Zhou H."/>
        </authorList>
    </citation>
    <scope>IDENTIFICATION BY MASS SPECTROMETRY [LARGE SCALE ANALYSIS]</scope>
</reference>
<reference key="21">
    <citation type="journal article" date="2009" name="Science">
        <title>Global analysis of Cdk1 substrate phosphorylation sites provides insights into evolution.</title>
        <authorList>
            <person name="Holt L.J."/>
            <person name="Tuch B.B."/>
            <person name="Villen J."/>
            <person name="Johnson A.D."/>
            <person name="Gygi S.P."/>
            <person name="Morgan D.O."/>
        </authorList>
    </citation>
    <scope>IDENTIFICATION BY MASS SPECTROMETRY [LARGE SCALE ANALYSIS]</scope>
</reference>
<reference key="22">
    <citation type="journal article" date="2017" name="Int. J. Mol. Sci.">
        <title>In Vitro and In Vivo Studies on the Structural Organization of Chs3 from Saccharomyces cerevisiae.</title>
        <authorList>
            <person name="Gohlke S."/>
            <person name="Muthukrishnan S."/>
            <person name="Merzendorfer H."/>
        </authorList>
    </citation>
    <scope>SUBUNIT</scope>
    <scope>SUBCELLULAR LOCATION</scope>
    <scope>DISRUPTION PHENOTYPE</scope>
    <scope>TOPOLOGY</scope>
    <scope>MOTIF</scope>
</reference>
<feature type="chain" id="PRO_0000193729" description="Chitin synthase 3">
    <location>
        <begin position="1"/>
        <end position="1165"/>
    </location>
</feature>
<feature type="topological domain" description="Cytoplasmic" evidence="25">
    <location>
        <begin position="1"/>
        <end position="170"/>
    </location>
</feature>
<feature type="transmembrane region" description="Helical" evidence="1">
    <location>
        <begin position="171"/>
        <end position="191"/>
    </location>
</feature>
<feature type="topological domain" description="Extracellular" evidence="25">
    <location>
        <begin position="192"/>
        <end position="340"/>
    </location>
</feature>
<feature type="transmembrane region" description="Helical" evidence="25">
    <location>
        <begin position="341"/>
        <end position="354"/>
    </location>
</feature>
<feature type="topological domain" description="Cytoplasmic" evidence="25">
    <location>
        <begin position="355"/>
        <end position="452"/>
    </location>
</feature>
<feature type="transmembrane region" description="Helical" evidence="1">
    <location>
        <begin position="453"/>
        <end position="473"/>
    </location>
</feature>
<feature type="topological domain" description="Extracellular" evidence="25">
    <location>
        <begin position="474"/>
        <end position="891"/>
    </location>
</feature>
<feature type="transmembrane region" description="Helical" evidence="25">
    <location>
        <begin position="892"/>
        <end position="910"/>
    </location>
</feature>
<feature type="topological domain" description="Cytoplasmic" evidence="25">
    <location>
        <begin position="911"/>
        <end position="1029"/>
    </location>
</feature>
<feature type="transmembrane region" description="Helical" evidence="1">
    <location>
        <begin position="1030"/>
        <end position="1050"/>
    </location>
</feature>
<feature type="topological domain" description="Extracellular" evidence="25">
    <location>
        <begin position="1051"/>
        <end position="1055"/>
    </location>
</feature>
<feature type="transmembrane region" description="Helical" evidence="1">
    <location>
        <begin position="1056"/>
        <end position="1076"/>
    </location>
</feature>
<feature type="topological domain" description="Cytoplasmic" evidence="25">
    <location>
        <begin position="1077"/>
        <end position="1165"/>
    </location>
</feature>
<feature type="region of interest" description="Disordered" evidence="3">
    <location>
        <begin position="19"/>
        <end position="53"/>
    </location>
</feature>
<feature type="region of interest" description="Disordered" evidence="3">
    <location>
        <begin position="74"/>
        <end position="97"/>
    </location>
</feature>
<feature type="compositionally biased region" description="Polar residues" evidence="3">
    <location>
        <begin position="74"/>
        <end position="92"/>
    </location>
</feature>
<feature type="modified residue" description="Phosphoserine" evidence="27">
    <location>
        <position position="537"/>
    </location>
</feature>
<feature type="modified residue" description="Phosphothreonine" evidence="27">
    <location>
        <position position="538"/>
    </location>
</feature>
<feature type="glycosylation site" description="N-linked (GlcNAc...) asparagine" evidence="2">
    <location>
        <position position="303"/>
    </location>
</feature>
<feature type="glycosylation site" description="N-linked (GlcNAc...) asparagine" evidence="2">
    <location>
        <position position="332"/>
    </location>
</feature>
<feature type="cross-link" description="Glycyl lysine isopeptide (Lys-Gly) (interchain with G-Cter in ubiquitin)" evidence="4">
    <location>
        <position position="136"/>
    </location>
</feature>
<feature type="mutagenesis site" description="Reduces catalytic activity by 67%." evidence="18">
    <original>S</original>
    <variation>A</variation>
    <location>
        <position position="991"/>
    </location>
</feature>
<feature type="mutagenesis site" description="Reduces catalytic activity by 89%." evidence="18">
    <original>R</original>
    <variation>A</variation>
    <location>
        <position position="993"/>
    </location>
</feature>
<feature type="mutagenesis site" description="Completely abolishes catalytic activity." evidence="18">
    <original>R</original>
    <variation>A</variation>
    <location>
        <position position="994"/>
    </location>
</feature>
<feature type="mutagenesis site" description="Reduces catalytic activity by 87%." evidence="18">
    <original>R</original>
    <variation>A</variation>
    <location>
        <position position="995"/>
    </location>
</feature>
<feature type="mutagenesis site" description="Reduces catalytic activity by 59%." evidence="18">
    <original>S</original>
    <variation>A</variation>
    <location>
        <position position="999"/>
    </location>
</feature>
<feature type="sequence conflict" description="In Ref. 1; AAA34844." evidence="23" ref="1">
    <original>F</original>
    <variation>L</variation>
    <location>
        <position position="1163"/>
    </location>
</feature>
<feature type="helix" evidence="28">
    <location>
        <begin position="13"/>
        <end position="23"/>
    </location>
</feature>
<proteinExistence type="evidence at protein level"/>
<accession>P29465</accession>
<accession>D6VQ25</accession>
<name>CHS3_YEAST</name>
<comment type="function">
    <text evidence="6 11 12 18 24">Polymerizes chitin, a structural polymer of the cell wall and septum, by transferring the sugar moiety of UDP-GlcNAc to the non-reducing end of the growing chitin polymer (Probable) (PubMed:9760183). Appears to be responsible for synthesis of the majority of the chitin found in the cell wall periphery (PubMed:2050738). It is involved in the synthesis of the chitin ring that forms in the cell wall just before bud emergence (PubMed:2050738). This ring remains at the base of the bud as the bud grows and ultimately forms part of the bud scar marking the division site on the mother cell (PubMed:2050738). Also catalyzes the synthesis of chitin laid down during mating and spore cell-wall synthesis (PubMed:1293886, PubMed:2050737, PubMed:2050738).</text>
</comment>
<comment type="catalytic activity">
    <reaction evidence="18">
        <text>[(1-&gt;4)-N-acetyl-beta-D-glucosaminyl](n) + UDP-N-acetyl-alpha-D-glucosamine = [(1-&gt;4)-N-acetyl-beta-D-glucosaminyl](n+1) + UDP + H(+)</text>
        <dbReference type="Rhea" id="RHEA:16637"/>
        <dbReference type="Rhea" id="RHEA-COMP:9593"/>
        <dbReference type="Rhea" id="RHEA-COMP:9595"/>
        <dbReference type="ChEBI" id="CHEBI:15378"/>
        <dbReference type="ChEBI" id="CHEBI:17029"/>
        <dbReference type="ChEBI" id="CHEBI:57705"/>
        <dbReference type="ChEBI" id="CHEBI:58223"/>
        <dbReference type="EC" id="2.4.1.16"/>
    </reaction>
</comment>
<comment type="subunit">
    <text evidence="13 17">Homodimer (PubMed:28346351). May form higher order oligomers (PubMed:28346351). Seems to interact with BNI4 and SKT5 which link CHS3 to septins (PubMed:28346351, PubMed:9314530).</text>
</comment>
<comment type="interaction">
    <interactant intactId="EBI-4632">
        <id>P29465</id>
    </interactant>
    <interactant intactId="EBI-24756">
        <id>P38843</id>
        <label>CHS7</label>
    </interactant>
    <organismsDiffer>false</organismsDiffer>
    <experiments>3</experiments>
</comment>
<comment type="interaction">
    <interactant intactId="EBI-4632">
        <id>P29465</id>
    </interactant>
    <interactant intactId="EBI-3121">
        <id>P32660</id>
        <label>DNF1</label>
    </interactant>
    <organismsDiffer>false</organismsDiffer>
    <experiments>3</experiments>
</comment>
<comment type="interaction">
    <interactant intactId="EBI-4632">
        <id>P29465</id>
    </interactant>
    <interactant intactId="EBI-9653">
        <id>P09620</id>
        <label>KEX1</label>
    </interactant>
    <organismsDiffer>false</organismsDiffer>
    <experiments>3</experiments>
</comment>
<comment type="subcellular location">
    <subcellularLocation>
        <location evidence="5 10 13">Cell membrane</location>
        <topology evidence="1">Multi-pass membrane protein</topology>
    </subcellularLocation>
    <subcellularLocation>
        <location evidence="8 13 14">Bud neck</location>
    </subcellularLocation>
    <subcellularLocation>
        <location evidence="5 13 15">Cytoplasmic vesicle membrane</location>
        <topology evidence="1">Multi-pass membrane protein</topology>
    </subcellularLocation>
    <text evidence="5 14 15">Localizes to a ring on the surface of cells about to undergo bud emergence and in the mother-bud neck of small-budded cells (PubMed:8909536). Delocalized throughout the plasma membrane during heat shock (PubMed:12928491). Also localizes to intracellular membrane-bound particles called chitosomes, proposed to act as a reservoir for regulated transport of chitin synthase enzymes to the division septum (PubMed:12928491, PubMed:8970154).</text>
</comment>
<comment type="PTM">
    <text evidence="18">Glycosylated.</text>
</comment>
<comment type="PTM">
    <text evidence="8">Palmitoylated by PFA4; required for proper export from the ER.</text>
</comment>
<comment type="disruption phenotype">
    <text evidence="13 16">Decreases cell wall chitin level (PubMed:28346351). Resistance to Calcofluor White (cell wall stressor) (PubMed:28346351). Decreases conjugation frequency (PubMed:9234668).</text>
</comment>
<comment type="miscellaneous">
    <text evidence="7">Present with 1510 molecules/cell in log phase SD medium.</text>
</comment>
<comment type="similarity">
    <text evidence="23">Belongs to the chitin synthase family. Class IV subfamily.</text>
</comment>
<comment type="caution">
    <text evidence="9 13">Was originally thought that the N- and C-termini were extracellular (PubMed:16847258). However, more recent data suggests that the N- and C-termini are cytoplasmic (PubMed:28346351).</text>
</comment>
<protein>
    <recommendedName>
        <fullName evidence="21">Chitin synthase 3</fullName>
        <ecNumber evidence="18">2.4.1.16</ecNumber>
    </recommendedName>
    <alternativeName>
        <fullName>Chitin-UDP acetyl-glucosaminyl transferase 3</fullName>
    </alternativeName>
    <alternativeName>
        <fullName>Class-IV chitin synthase 3</fullName>
    </alternativeName>
</protein>
<keyword id="KW-0002">3D-structure</keyword>
<keyword id="KW-1003">Cell membrane</keyword>
<keyword id="KW-0961">Cell wall biogenesis/degradation</keyword>
<keyword id="KW-0968">Cytoplasmic vesicle</keyword>
<keyword id="KW-0325">Glycoprotein</keyword>
<keyword id="KW-0328">Glycosyltransferase</keyword>
<keyword id="KW-1017">Isopeptide bond</keyword>
<keyword id="KW-0472">Membrane</keyword>
<keyword id="KW-0597">Phosphoprotein</keyword>
<keyword id="KW-1185">Reference proteome</keyword>
<keyword id="KW-0808">Transferase</keyword>
<keyword id="KW-0812">Transmembrane</keyword>
<keyword id="KW-1133">Transmembrane helix</keyword>
<keyword id="KW-0832">Ubl conjugation</keyword>
<sequence>MTGLNGDDPDDYYLNLNQDEESLLRSRHSVGSGAPHRQGSLVRPERSRLNNPDNPHFYYAQKTQEQMNHLDVLPSSTGVNPNATRRSGSLRSKGSVRSKFSGRETDSYLLQDMNTTDKKASVKISDEGVAEDEFDKDGDVDNFEESSTQPINKSIKPLRKETNDTLSFWQMYCYFITFWAPAPILAFCGMPKKERQMAWREKVALISVILYIGAIVAFLTFGFTKTVCSSSKLRLKNNEVSTEFVVINGKAYELDTSSRSGIQDVEVDSDTLYGPWSDAGKDASFLFQNVNGNCHNLITPKSNSSIPHDDDNNLAWYFPCKLKNQDGSSKPNFTVENYAGWNCHTSKEDRDAFYGLKSKADVYFTWDGIKNSSRNLIVYNGDVLDLDLLDWLEKDDVDYPVVFDDLKTSNLQGYDLSLVLSNGHERKIARCLSEIIKVGEVDSKTVGCIASDVVLYVSLVFILSVVIIKFIIACYFRWTVARKQGAYIVDNKTMDKHTNDIEDWSNNIQTKAPLKEVDPHLRPKKYSKKSLGHKRASTFDLLKKHSSKMFQFNESVIDLDTSMSSSLQSSGSYRGMTTMTTQNAWKLSNENKAVHSRNPSTLLPTSSMFWNKATSSPVPGSSLIQSLDSTIIHPDIVQQPPLDFMPYGFPLIHTICFVTCYSEDEEGLRTTLDSLSTTDYPNSHKLLMVVCDGLIKGSGNDKTTPEIALGMMDDFVTPPDEVKPYSYVAVASGSKRHNMAKIYAGFYKYDDSTIPPENQQRVPIITIVKCGTPAEQGAAKPGNRGKRDSQIILMSFLEKITFDERMTQLEFQLLKNIWQITGLMADFYETVLMVDADTKVFPDALTHMVAEMVKDPLIMGLCGETKIANKAQSWVTAIQVFEYYISHHQAKAFESVFGSVTCLPGCFSMYRIKSPKGSDGYWVPVLANPDIVERYSDNVTNTLHKKNLLLLGEDRFLSSLMLKTFPKRKQVFVPKAACKTIAPDKFKVLLSQRRRWINSTVHNLFELVLIRDLCGTFCFSMQFVIGIELIGTMVLPLAICFTIYVIIFAIVSKPTPVITLVLLAIILGLPGLIVVITATRWSYLWWMCVYICALPIWNFVLPSYAYWKFDDFSWGDTRTIAGGNKKAQDENEGEFDHSKIKMRTWREFEREDILNRKEESDSFVA</sequence>
<organism>
    <name type="scientific">Saccharomyces cerevisiae (strain ATCC 204508 / S288c)</name>
    <name type="common">Baker's yeast</name>
    <dbReference type="NCBI Taxonomy" id="559292"/>
    <lineage>
        <taxon>Eukaryota</taxon>
        <taxon>Fungi</taxon>
        <taxon>Dikarya</taxon>
        <taxon>Ascomycota</taxon>
        <taxon>Saccharomycotina</taxon>
        <taxon>Saccharomycetes</taxon>
        <taxon>Saccharomycetales</taxon>
        <taxon>Saccharomycetaceae</taxon>
        <taxon>Saccharomyces</taxon>
    </lineage>
</organism>
<gene>
    <name evidence="22" type="primary">CHS3</name>
    <name evidence="21" type="synonym">CAL1</name>
    <name evidence="20" type="synonym">CSD2</name>
    <name evidence="19" type="synonym">DIT101</name>
    <name type="synonym">KIT2</name>
    <name evidence="26" type="ordered locus">YBR023C</name>
    <name type="ORF">YBR0305</name>
</gene>
<dbReference type="EC" id="2.4.1.16" evidence="18"/>
<dbReference type="EMBL" id="X76078">
    <property type="protein sequence ID" value="CAA53680.1"/>
    <property type="molecule type" value="Genomic_DNA"/>
</dbReference>
<dbReference type="EMBL" id="M73697">
    <property type="protein sequence ID" value="AAA34844.1"/>
    <property type="molecule type" value="Genomic_DNA"/>
</dbReference>
<dbReference type="EMBL" id="Z35892">
    <property type="protein sequence ID" value="CAA84965.1"/>
    <property type="molecule type" value="Genomic_DNA"/>
</dbReference>
<dbReference type="EMBL" id="X57300">
    <property type="protein sequence ID" value="CAA40559.1"/>
    <property type="molecule type" value="Genomic_DNA"/>
</dbReference>
<dbReference type="EMBL" id="BK006936">
    <property type="protein sequence ID" value="DAA07145.1"/>
    <property type="molecule type" value="Genomic_DNA"/>
</dbReference>
<dbReference type="PIR" id="S45879">
    <property type="entry name" value="S45879"/>
</dbReference>
<dbReference type="RefSeq" id="NP_009579.1">
    <property type="nucleotide sequence ID" value="NM_001178371.1"/>
</dbReference>
<dbReference type="PDB" id="4WJW">
    <property type="method" value="X-ray"/>
    <property type="resolution" value="2.59 A"/>
    <property type="chains" value="P=10-27"/>
</dbReference>
<dbReference type="PDBsum" id="4WJW"/>
<dbReference type="SMR" id="P29465"/>
<dbReference type="BioGRID" id="32726">
    <property type="interactions" value="296"/>
</dbReference>
<dbReference type="DIP" id="DIP-2482N"/>
<dbReference type="FunCoup" id="P29465">
    <property type="interactions" value="122"/>
</dbReference>
<dbReference type="IntAct" id="P29465">
    <property type="interactions" value="39"/>
</dbReference>
<dbReference type="MINT" id="P29465"/>
<dbReference type="STRING" id="4932.YBR023C"/>
<dbReference type="BindingDB" id="P29465"/>
<dbReference type="ChEMBL" id="CHEMBL5597"/>
<dbReference type="CAZy" id="GT2">
    <property type="family name" value="Glycosyltransferase Family 2"/>
</dbReference>
<dbReference type="TCDB" id="4.D.1.1.12">
    <property type="family name" value="the putative vectorial glycosyl polymerization (vgp) family"/>
</dbReference>
<dbReference type="GlyCosmos" id="P29465">
    <property type="glycosylation" value="2 sites, No reported glycans"/>
</dbReference>
<dbReference type="GlyGen" id="P29465">
    <property type="glycosylation" value="2 sites"/>
</dbReference>
<dbReference type="iPTMnet" id="P29465"/>
<dbReference type="SwissPalm" id="P29465"/>
<dbReference type="PaxDb" id="4932-YBR023C"/>
<dbReference type="PeptideAtlas" id="P29465"/>
<dbReference type="EnsemblFungi" id="YBR023C_mRNA">
    <property type="protein sequence ID" value="YBR023C"/>
    <property type="gene ID" value="YBR023C"/>
</dbReference>
<dbReference type="GeneID" id="852311"/>
<dbReference type="KEGG" id="sce:YBR023C"/>
<dbReference type="AGR" id="SGD:S000000227"/>
<dbReference type="SGD" id="S000000227">
    <property type="gene designation" value="CHS3"/>
</dbReference>
<dbReference type="VEuPathDB" id="FungiDB:YBR023C"/>
<dbReference type="eggNOG" id="KOG2571">
    <property type="taxonomic scope" value="Eukaryota"/>
</dbReference>
<dbReference type="HOGENOM" id="CLU_002572_1_0_1"/>
<dbReference type="InParanoid" id="P29465"/>
<dbReference type="OMA" id="DIMGLCG"/>
<dbReference type="OrthoDB" id="370884at2759"/>
<dbReference type="BioCyc" id="YEAST:YBR023C-MONOMER"/>
<dbReference type="BRENDA" id="2.4.1.16">
    <property type="organism ID" value="984"/>
</dbReference>
<dbReference type="BioGRID-ORCS" id="852311">
    <property type="hits" value="2 hits in 10 CRISPR screens"/>
</dbReference>
<dbReference type="EvolutionaryTrace" id="P29465"/>
<dbReference type="PRO" id="PR:P29465"/>
<dbReference type="Proteomes" id="UP000002311">
    <property type="component" value="Chromosome II"/>
</dbReference>
<dbReference type="RNAct" id="P29465">
    <property type="molecule type" value="protein"/>
</dbReference>
<dbReference type="GO" id="GO:0071944">
    <property type="term" value="C:cell periphery"/>
    <property type="evidence" value="ECO:0000318"/>
    <property type="project" value="GO_Central"/>
</dbReference>
<dbReference type="GO" id="GO:0030428">
    <property type="term" value="C:cell septum"/>
    <property type="evidence" value="ECO:0000318"/>
    <property type="project" value="GO_Central"/>
</dbReference>
<dbReference type="GO" id="GO:0005935">
    <property type="term" value="C:cellular bud neck"/>
    <property type="evidence" value="ECO:0000314"/>
    <property type="project" value="UniProtKB"/>
</dbReference>
<dbReference type="GO" id="GO:0045009">
    <property type="term" value="C:chitosome"/>
    <property type="evidence" value="ECO:0000314"/>
    <property type="project" value="SGD"/>
</dbReference>
<dbReference type="GO" id="GO:0005737">
    <property type="term" value="C:cytoplasm"/>
    <property type="evidence" value="ECO:0000314"/>
    <property type="project" value="SGD"/>
</dbReference>
<dbReference type="GO" id="GO:0030659">
    <property type="term" value="C:cytoplasmic vesicle membrane"/>
    <property type="evidence" value="ECO:0007669"/>
    <property type="project" value="UniProtKB-SubCell"/>
</dbReference>
<dbReference type="GO" id="GO:0005783">
    <property type="term" value="C:endoplasmic reticulum"/>
    <property type="evidence" value="ECO:0007005"/>
    <property type="project" value="SGD"/>
</dbReference>
<dbReference type="GO" id="GO:0000131">
    <property type="term" value="C:incipient cellular bud site"/>
    <property type="evidence" value="ECO:0000314"/>
    <property type="project" value="SGD"/>
</dbReference>
<dbReference type="GO" id="GO:0043332">
    <property type="term" value="C:mating projection tip"/>
    <property type="evidence" value="ECO:0007005"/>
    <property type="project" value="SGD"/>
</dbReference>
<dbReference type="GO" id="GO:0005886">
    <property type="term" value="C:plasma membrane"/>
    <property type="evidence" value="ECO:0000314"/>
    <property type="project" value="UniProtKB"/>
</dbReference>
<dbReference type="GO" id="GO:0005628">
    <property type="term" value="C:prospore membrane"/>
    <property type="evidence" value="ECO:0000314"/>
    <property type="project" value="SGD"/>
</dbReference>
<dbReference type="GO" id="GO:0004100">
    <property type="term" value="F:chitin synthase activity"/>
    <property type="evidence" value="ECO:0000315"/>
    <property type="project" value="SGD"/>
</dbReference>
<dbReference type="GO" id="GO:0030476">
    <property type="term" value="P:ascospore wall assembly"/>
    <property type="evidence" value="ECO:0000315"/>
    <property type="project" value="SGD"/>
</dbReference>
<dbReference type="GO" id="GO:0006031">
    <property type="term" value="P:chitin biosynthetic process"/>
    <property type="evidence" value="ECO:0000315"/>
    <property type="project" value="SGD"/>
</dbReference>
<dbReference type="GO" id="GO:0097271">
    <property type="term" value="P:protein localization to bud neck"/>
    <property type="evidence" value="ECO:0000315"/>
    <property type="project" value="SGD"/>
</dbReference>
<dbReference type="CDD" id="cd04190">
    <property type="entry name" value="Chitin_synth_C"/>
    <property type="match status" value="1"/>
</dbReference>
<dbReference type="InterPro" id="IPR004835">
    <property type="entry name" value="Chitin_synth"/>
</dbReference>
<dbReference type="InterPro" id="IPR054295">
    <property type="entry name" value="CHS4-like_dom"/>
</dbReference>
<dbReference type="InterPro" id="IPR029044">
    <property type="entry name" value="Nucleotide-diphossugar_trans"/>
</dbReference>
<dbReference type="PANTHER" id="PTHR22914">
    <property type="entry name" value="CHITIN SYNTHASE"/>
    <property type="match status" value="1"/>
</dbReference>
<dbReference type="PANTHER" id="PTHR22914:SF16">
    <property type="entry name" value="CHITIN SYNTHASE 3"/>
    <property type="match status" value="1"/>
</dbReference>
<dbReference type="Pfam" id="PF03142">
    <property type="entry name" value="Chitin_synth_2"/>
    <property type="match status" value="1"/>
</dbReference>
<dbReference type="Pfam" id="PF22997">
    <property type="entry name" value="CHS4"/>
    <property type="match status" value="1"/>
</dbReference>
<dbReference type="SUPFAM" id="SSF53448">
    <property type="entry name" value="Nucleotide-diphospho-sugar transferases"/>
    <property type="match status" value="1"/>
</dbReference>
<evidence type="ECO:0000255" key="1"/>
<evidence type="ECO:0000255" key="2">
    <source>
        <dbReference type="PROSITE-ProRule" id="PRU00498"/>
    </source>
</evidence>
<evidence type="ECO:0000256" key="3">
    <source>
        <dbReference type="SAM" id="MobiDB-lite"/>
    </source>
</evidence>
<evidence type="ECO:0000269" key="4">
    <source>
    </source>
</evidence>
<evidence type="ECO:0000269" key="5">
    <source>
    </source>
</evidence>
<evidence type="ECO:0000269" key="6">
    <source>
    </source>
</evidence>
<evidence type="ECO:0000269" key="7">
    <source>
    </source>
</evidence>
<evidence type="ECO:0000269" key="8">
    <source>
    </source>
</evidence>
<evidence type="ECO:0000269" key="9">
    <source>
    </source>
</evidence>
<evidence type="ECO:0000269" key="10">
    <source>
    </source>
</evidence>
<evidence type="ECO:0000269" key="11">
    <source>
    </source>
</evidence>
<evidence type="ECO:0000269" key="12">
    <source>
    </source>
</evidence>
<evidence type="ECO:0000269" key="13">
    <source>
    </source>
</evidence>
<evidence type="ECO:0000269" key="14">
    <source>
    </source>
</evidence>
<evidence type="ECO:0000269" key="15">
    <source>
    </source>
</evidence>
<evidence type="ECO:0000269" key="16">
    <source>
    </source>
</evidence>
<evidence type="ECO:0000269" key="17">
    <source>
    </source>
</evidence>
<evidence type="ECO:0000269" key="18">
    <source>
    </source>
</evidence>
<evidence type="ECO:0000303" key="19">
    <source>
    </source>
</evidence>
<evidence type="ECO:0000303" key="20">
    <source>
    </source>
</evidence>
<evidence type="ECO:0000303" key="21">
    <source>
    </source>
</evidence>
<evidence type="ECO:0000303" key="22">
    <source>
    </source>
</evidence>
<evidence type="ECO:0000305" key="23"/>
<evidence type="ECO:0000305" key="24">
    <source>
    </source>
</evidence>
<evidence type="ECO:0000305" key="25">
    <source>
    </source>
</evidence>
<evidence type="ECO:0000312" key="26">
    <source>
        <dbReference type="SGD" id="S000000227"/>
    </source>
</evidence>
<evidence type="ECO:0007744" key="27">
    <source>
    </source>
</evidence>
<evidence type="ECO:0007829" key="28">
    <source>
        <dbReference type="PDB" id="4WJW"/>
    </source>
</evidence>